<sequence length="198" mass="23097">MLPETTTLQPLPSVTTIMNEPPARSPMEDYYLFNQFQYNQNPYVYPPQPVYYNTWQDASTHHFDPFQSYQIPSPYEQPIQSSMCTTPLQPLEDSRIIFDESLTKNENEQKSFVEQDSSYESSGNRFGSQKGKKIAKVIRDACCSHCSTTTTTLWRKNDEGNLECNACNLYYRHNKVKRPLSLCKQKPTTRKRRQAKKE</sequence>
<accession>O61924</accession>
<accession>A6PVB2</accession>
<name>ELT7_CAEEL</name>
<dbReference type="EMBL" id="BX284605">
    <property type="protein sequence ID" value="CCD65225.1"/>
    <property type="molecule type" value="Genomic_DNA"/>
</dbReference>
<dbReference type="EMBL" id="BX284605">
    <property type="protein sequence ID" value="CCD65231.1"/>
    <property type="molecule type" value="Genomic_DNA"/>
</dbReference>
<dbReference type="PIR" id="T33255">
    <property type="entry name" value="T33255"/>
</dbReference>
<dbReference type="RefSeq" id="NP_001122856.1">
    <property type="nucleotide sequence ID" value="NM_001129384.3"/>
</dbReference>
<dbReference type="RefSeq" id="NP_001370475.1">
    <molecule id="O61924-2"/>
    <property type="nucleotide sequence ID" value="NM_001383300.2"/>
</dbReference>
<dbReference type="RefSeq" id="NP_504283.1">
    <molecule id="O61924-1"/>
    <property type="nucleotide sequence ID" value="NM_071882.6"/>
</dbReference>
<dbReference type="FunCoup" id="O61924">
    <property type="interactions" value="159"/>
</dbReference>
<dbReference type="IntAct" id="O61924">
    <property type="interactions" value="22"/>
</dbReference>
<dbReference type="STRING" id="6239.C18G1.2a.1"/>
<dbReference type="PaxDb" id="6239-C18G1.2a"/>
<dbReference type="EnsemblMetazoa" id="C18G1.2a.1">
    <molecule id="O61924-1"/>
    <property type="protein sequence ID" value="C18G1.2a.1"/>
    <property type="gene ID" value="WBGene00015981"/>
</dbReference>
<dbReference type="EnsemblMetazoa" id="C18G1.2b.1">
    <molecule id="O61924-2"/>
    <property type="protein sequence ID" value="C18G1.2b.1"/>
    <property type="gene ID" value="WBGene00015981"/>
</dbReference>
<dbReference type="GeneID" id="178868"/>
<dbReference type="KEGG" id="cel:CELE_C18G1.2"/>
<dbReference type="UCSC" id="C18G1.2a">
    <property type="organism name" value="c. elegans"/>
</dbReference>
<dbReference type="AGR" id="WB:WBGene00015981"/>
<dbReference type="CTD" id="178868"/>
<dbReference type="WormBase" id="C18G1.2a">
    <molecule id="O61924-1"/>
    <property type="protein sequence ID" value="CE17418"/>
    <property type="gene ID" value="WBGene00015981"/>
    <property type="gene designation" value="elt-7"/>
</dbReference>
<dbReference type="WormBase" id="C18G1.2b">
    <molecule id="O61924-2"/>
    <property type="protein sequence ID" value="CE41205"/>
    <property type="gene ID" value="WBGene00015981"/>
    <property type="gene designation" value="elt-7"/>
</dbReference>
<dbReference type="eggNOG" id="KOG1601">
    <property type="taxonomic scope" value="Eukaryota"/>
</dbReference>
<dbReference type="HOGENOM" id="CLU_120635_0_0_1"/>
<dbReference type="InParanoid" id="O61924"/>
<dbReference type="OMA" id="LECNACN"/>
<dbReference type="OrthoDB" id="515401at2759"/>
<dbReference type="PhylomeDB" id="O61924"/>
<dbReference type="Reactome" id="R-CEL-5683826">
    <property type="pathway name" value="Surfactant metabolism"/>
</dbReference>
<dbReference type="Reactome" id="R-CEL-8936459">
    <property type="pathway name" value="RUNX1 regulates genes involved in megakaryocyte differentiation and platelet function"/>
</dbReference>
<dbReference type="SignaLink" id="O61924"/>
<dbReference type="PRO" id="PR:O61924"/>
<dbReference type="Proteomes" id="UP000001940">
    <property type="component" value="Chromosome V"/>
</dbReference>
<dbReference type="Bgee" id="WBGene00015981">
    <property type="expression patterns" value="Expressed in embryo and 4 other cell types or tissues"/>
</dbReference>
<dbReference type="GO" id="GO:0005634">
    <property type="term" value="C:nucleus"/>
    <property type="evidence" value="ECO:0000314"/>
    <property type="project" value="WormBase"/>
</dbReference>
<dbReference type="GO" id="GO:0000981">
    <property type="term" value="F:DNA-binding transcription factor activity, RNA polymerase II-specific"/>
    <property type="evidence" value="ECO:0000318"/>
    <property type="project" value="GO_Central"/>
</dbReference>
<dbReference type="GO" id="GO:0000978">
    <property type="term" value="F:RNA polymerase II cis-regulatory region sequence-specific DNA binding"/>
    <property type="evidence" value="ECO:0000318"/>
    <property type="project" value="GO_Central"/>
</dbReference>
<dbReference type="GO" id="GO:0008270">
    <property type="term" value="F:zinc ion binding"/>
    <property type="evidence" value="ECO:0007669"/>
    <property type="project" value="UniProtKB-KW"/>
</dbReference>
<dbReference type="GO" id="GO:0045165">
    <property type="term" value="P:cell fate commitment"/>
    <property type="evidence" value="ECO:0000318"/>
    <property type="project" value="GO_Central"/>
</dbReference>
<dbReference type="GO" id="GO:0050829">
    <property type="term" value="P:defense response to Gram-negative bacterium"/>
    <property type="evidence" value="ECO:0007007"/>
    <property type="project" value="WormBase"/>
</dbReference>
<dbReference type="GO" id="GO:0007493">
    <property type="term" value="P:endodermal cell fate determination"/>
    <property type="evidence" value="ECO:0000316"/>
    <property type="project" value="WormBase"/>
</dbReference>
<dbReference type="GO" id="GO:0000122">
    <property type="term" value="P:negative regulation of transcription by RNA polymerase II"/>
    <property type="evidence" value="ECO:0000318"/>
    <property type="project" value="GO_Central"/>
</dbReference>
<dbReference type="GO" id="GO:0045944">
    <property type="term" value="P:positive regulation of transcription by RNA polymerase II"/>
    <property type="evidence" value="ECO:0000318"/>
    <property type="project" value="GO_Central"/>
</dbReference>
<dbReference type="CDD" id="cd00202">
    <property type="entry name" value="ZnF_GATA"/>
    <property type="match status" value="1"/>
</dbReference>
<dbReference type="Gene3D" id="3.30.50.10">
    <property type="entry name" value="Erythroid Transcription Factor GATA-1, subunit A"/>
    <property type="match status" value="1"/>
</dbReference>
<dbReference type="InterPro" id="IPR039355">
    <property type="entry name" value="Transcription_factor_GATA"/>
</dbReference>
<dbReference type="InterPro" id="IPR000679">
    <property type="entry name" value="Znf_GATA"/>
</dbReference>
<dbReference type="InterPro" id="IPR013088">
    <property type="entry name" value="Znf_NHR/GATA"/>
</dbReference>
<dbReference type="PANTHER" id="PTHR10071:SF328">
    <property type="entry name" value="TRANSCRIPTION FACTOR ELT-1-RELATED"/>
    <property type="match status" value="1"/>
</dbReference>
<dbReference type="PANTHER" id="PTHR10071">
    <property type="entry name" value="TRANSCRIPTION FACTOR GATA FAMILY MEMBER"/>
    <property type="match status" value="1"/>
</dbReference>
<dbReference type="Pfam" id="PF00320">
    <property type="entry name" value="GATA"/>
    <property type="match status" value="1"/>
</dbReference>
<dbReference type="PRINTS" id="PR00619">
    <property type="entry name" value="GATAZNFINGER"/>
</dbReference>
<dbReference type="SMART" id="SM00401">
    <property type="entry name" value="ZnF_GATA"/>
    <property type="match status" value="1"/>
</dbReference>
<dbReference type="SUPFAM" id="SSF57716">
    <property type="entry name" value="Glucocorticoid receptor-like (DNA-binding domain)"/>
    <property type="match status" value="1"/>
</dbReference>
<dbReference type="PROSITE" id="PS00344">
    <property type="entry name" value="GATA_ZN_FINGER_1"/>
    <property type="match status" value="1"/>
</dbReference>
<dbReference type="PROSITE" id="PS50114">
    <property type="entry name" value="GATA_ZN_FINGER_2"/>
    <property type="match status" value="1"/>
</dbReference>
<protein>
    <recommendedName>
        <fullName evidence="9">Transcription factor elt-7</fullName>
    </recommendedName>
</protein>
<reference evidence="11" key="1">
    <citation type="journal article" date="1998" name="Science">
        <title>Genome sequence of the nematode C. elegans: a platform for investigating biology.</title>
        <authorList>
            <consortium name="The C. elegans sequencing consortium"/>
        </authorList>
    </citation>
    <scope>NUCLEOTIDE SEQUENCE [LARGE SCALE GENOMIC DNA]</scope>
    <source>
        <strain evidence="11">Bristol N2</strain>
    </source>
</reference>
<reference evidence="9" key="2">
    <citation type="journal article" date="2006" name="Proc. Natl. Acad. Sci. U.S.A.">
        <title>A conserved role for a GATA transcription factor in regulating epithelial innate immune responses.</title>
        <authorList>
            <person name="Shapira M."/>
            <person name="Hamlin B.J."/>
            <person name="Rong J."/>
            <person name="Chen K."/>
            <person name="Ronen M."/>
            <person name="Tan M.W."/>
        </authorList>
    </citation>
    <scope>INDUCTION BY P.AERUGINOSA</scope>
</reference>
<reference evidence="9" key="3">
    <citation type="journal article" date="2008" name="J. Mol. Biol.">
        <title>Transcription factors GATA/ELT-2 and forkhead/HNF-3/PHA-4 regulate the tropomyosin gene expression in the pharynx and intestine of Caenorhabditis elegans.</title>
        <authorList>
            <person name="Anokye-Danso F."/>
            <person name="Anyanful A."/>
            <person name="Sakube Y."/>
            <person name="Kagawa H."/>
        </authorList>
    </citation>
    <scope>DISRUPTION PHENOTYPE</scope>
</reference>
<reference evidence="9" key="4">
    <citation type="journal article" date="2010" name="Dev. Biol.">
        <title>Endoderm development in Caenorhabditis elegans: the synergistic action of ELT-2 and -7 mediates the specification-differentiation transition.</title>
        <authorList>
            <person name="Sommermann E.M."/>
            <person name="Strohmaier K.R."/>
            <person name="Maduro M.F."/>
            <person name="Rothman J.H."/>
        </authorList>
    </citation>
    <scope>FUNCTION</scope>
    <scope>SUBCELLULAR LOCATION</scope>
    <scope>DEVELOPMENTAL STAGE</scope>
    <scope>DISRUPTION PHENOTYPE</scope>
</reference>
<reference evidence="9" key="5">
    <citation type="journal article" date="2011" name="Dev. Comp. Immunol.">
        <title>Mode of bacterial pathogenesis determines phenotype in elt-2 and elt-7 RNAi Caenorhabditis elegans.</title>
        <authorList>
            <person name="Elliott S.L."/>
            <person name="Sturgeon C.R."/>
            <person name="Travers D.M."/>
            <person name="Montgomery M.C."/>
        </authorList>
    </citation>
    <scope>FUNCTION</scope>
    <scope>DISRUPTION PHENOTYPE</scope>
</reference>
<reference evidence="9" key="6">
    <citation type="journal article" date="2013" name="Development">
        <title>Transdifferentiation and remodeling of post-embryonic C. elegans cells by a single transcription factor.</title>
        <authorList>
            <person name="Riddle M.R."/>
            <person name="Weintraub A."/>
            <person name="Nguyen K.C."/>
            <person name="Hall D.H."/>
            <person name="Rothman J.H."/>
        </authorList>
    </citation>
    <scope>FUNCTION</scope>
</reference>
<reference key="7">
    <citation type="journal article" date="2016" name="Development">
        <title>The Function and Regulation of the GATA Factor ELT-2 in the C. elegans Endoderm.</title>
        <authorList>
            <person name="Wiesenfahrt T."/>
            <person name="Berg J.Y."/>
            <person name="Nishimura E.O."/>
            <person name="Robinson A.G."/>
            <person name="Goszczynski B."/>
            <person name="Lieb J.D."/>
            <person name="McGhee J.D."/>
        </authorList>
    </citation>
    <scope>FUNCTION</scope>
</reference>
<gene>
    <name evidence="12" type="primary">elt-7</name>
    <name evidence="12" type="ORF">C18G1.2</name>
</gene>
<comment type="function">
    <text evidence="5 6 7 8">Transcriptional activator that binds to the consensus sequence 5'-[AT]GATA[AG]-3' (PubMed:26700680). Required for gut-specific differentiation, specifically acting with the GATA region-binding transcription factor elt-2 to control normal gene expression and promote normal formation of the intestine (PubMed:20807527, PubMed:24257624). May have a protective role in response to infection by Gram-negative bacteria such as P.aeruginosa (PubMed:21168435).</text>
</comment>
<comment type="subcellular location">
    <subcellularLocation>
        <location evidence="10">Nucleus</location>
    </subcellularLocation>
</comment>
<comment type="alternative products">
    <event type="alternative splicing"/>
    <isoform>
        <id>O61924-1</id>
        <name evidence="12">a</name>
        <sequence type="displayed"/>
    </isoform>
    <isoform>
        <id>O61924-2</id>
        <name evidence="13">b</name>
        <sequence type="described" ref="VSP_058156"/>
    </isoform>
</comment>
<comment type="developmental stage">
    <text evidence="5">Expressed highly during embryogenesis. Expressed in the endoderm in cells of the gut lineage beginning at the 2E cell stage (endodermal cell stage) of embryogenesis through to adulthood.</text>
</comment>
<comment type="induction">
    <text evidence="3">Induced by P.aeruginosa infection.</text>
</comment>
<comment type="disruption phenotype">
    <text evidence="4 5 6">No obvious phenotype (PubMed:20807527). RNAi-mediated knockdown results in no obvious phenotype (PubMed:18448117). Following infection with P.aeruginosa, RNAi-mediated knockdown results in reduced survival and slight intestinal distension (PubMed:21168435). Double mutation with elt-2 results in arrest at the L1 stage of larval development, reduced expression of gut-specific genes and a severe disruption to normal gut differentiation with the absence of birefringent and rhabditin granules, which are characteristic of normal gut differentiation, largely at the regions of the cell that interface with the pharyngeal and rectal valves (PubMed:20807527). These mutants also have essentially no gut lumen, with only infrequent patches of lumen and brush border in few animals, and reduced gut epithelialization as indicated by reduced expression of epithelial markers erm-1b, itx-1 and ajm-1 (PubMed:20807527).</text>
</comment>
<feature type="chain" id="PRO_0000435724" description="Transcription factor elt-7" evidence="9">
    <location>
        <begin position="1"/>
        <end position="198"/>
    </location>
</feature>
<feature type="zinc finger region" description="GATA-type" evidence="1">
    <location>
        <begin position="143"/>
        <end position="167"/>
    </location>
</feature>
<feature type="region of interest" description="Disordered" evidence="2">
    <location>
        <begin position="1"/>
        <end position="20"/>
    </location>
</feature>
<feature type="compositionally biased region" description="Polar residues" evidence="2">
    <location>
        <begin position="1"/>
        <end position="18"/>
    </location>
</feature>
<feature type="splice variant" id="VSP_058156" description="In isoform b." evidence="9">
    <location>
        <begin position="1"/>
        <end position="82"/>
    </location>
</feature>
<organism evidence="11">
    <name type="scientific">Caenorhabditis elegans</name>
    <dbReference type="NCBI Taxonomy" id="6239"/>
    <lineage>
        <taxon>Eukaryota</taxon>
        <taxon>Metazoa</taxon>
        <taxon>Ecdysozoa</taxon>
        <taxon>Nematoda</taxon>
        <taxon>Chromadorea</taxon>
        <taxon>Rhabditida</taxon>
        <taxon>Rhabditina</taxon>
        <taxon>Rhabditomorpha</taxon>
        <taxon>Rhabditoidea</taxon>
        <taxon>Rhabditidae</taxon>
        <taxon>Peloderinae</taxon>
        <taxon>Caenorhabditis</taxon>
    </lineage>
</organism>
<evidence type="ECO:0000255" key="1">
    <source>
        <dbReference type="PROSITE-ProRule" id="PRU00094"/>
    </source>
</evidence>
<evidence type="ECO:0000256" key="2">
    <source>
        <dbReference type="SAM" id="MobiDB-lite"/>
    </source>
</evidence>
<evidence type="ECO:0000269" key="3">
    <source>
    </source>
</evidence>
<evidence type="ECO:0000269" key="4">
    <source>
    </source>
</evidence>
<evidence type="ECO:0000269" key="5">
    <source>
    </source>
</evidence>
<evidence type="ECO:0000269" key="6">
    <source>
    </source>
</evidence>
<evidence type="ECO:0000269" key="7">
    <source>
    </source>
</evidence>
<evidence type="ECO:0000269" key="8">
    <source>
    </source>
</evidence>
<evidence type="ECO:0000305" key="9"/>
<evidence type="ECO:0000305" key="10">
    <source>
    </source>
</evidence>
<evidence type="ECO:0000312" key="11">
    <source>
        <dbReference type="Proteomes" id="UP000001940"/>
    </source>
</evidence>
<evidence type="ECO:0000312" key="12">
    <source>
        <dbReference type="WormBase" id="C18G1.2a"/>
    </source>
</evidence>
<evidence type="ECO:0000312" key="13">
    <source>
        <dbReference type="WormBase" id="C18G1.2b"/>
    </source>
</evidence>
<keyword id="KW-0010">Activator</keyword>
<keyword id="KW-0025">Alternative splicing</keyword>
<keyword id="KW-0221">Differentiation</keyword>
<keyword id="KW-0238">DNA-binding</keyword>
<keyword id="KW-0479">Metal-binding</keyword>
<keyword id="KW-0539">Nucleus</keyword>
<keyword id="KW-1185">Reference proteome</keyword>
<keyword id="KW-0804">Transcription</keyword>
<keyword id="KW-0805">Transcription regulation</keyword>
<keyword id="KW-0862">Zinc</keyword>
<keyword id="KW-0863">Zinc-finger</keyword>
<proteinExistence type="evidence at transcript level"/>